<evidence type="ECO:0000255" key="1">
    <source>
        <dbReference type="HAMAP-Rule" id="MF_01325"/>
    </source>
</evidence>
<evidence type="ECO:0000305" key="2"/>
<dbReference type="EMBL" id="CU207211">
    <property type="protein sequence ID" value="CAL63275.1"/>
    <property type="molecule type" value="Genomic_DNA"/>
</dbReference>
<dbReference type="SMR" id="A4G9T8"/>
<dbReference type="STRING" id="204773.HEAR3166"/>
<dbReference type="KEGG" id="har:HEAR3166"/>
<dbReference type="eggNOG" id="COG0087">
    <property type="taxonomic scope" value="Bacteria"/>
</dbReference>
<dbReference type="HOGENOM" id="CLU_044142_4_1_4"/>
<dbReference type="OrthoDB" id="9806135at2"/>
<dbReference type="Proteomes" id="UP000006697">
    <property type="component" value="Chromosome"/>
</dbReference>
<dbReference type="GO" id="GO:0022625">
    <property type="term" value="C:cytosolic large ribosomal subunit"/>
    <property type="evidence" value="ECO:0007669"/>
    <property type="project" value="TreeGrafter"/>
</dbReference>
<dbReference type="GO" id="GO:0019843">
    <property type="term" value="F:rRNA binding"/>
    <property type="evidence" value="ECO:0007669"/>
    <property type="project" value="UniProtKB-UniRule"/>
</dbReference>
<dbReference type="GO" id="GO:0003735">
    <property type="term" value="F:structural constituent of ribosome"/>
    <property type="evidence" value="ECO:0007669"/>
    <property type="project" value="InterPro"/>
</dbReference>
<dbReference type="GO" id="GO:0006412">
    <property type="term" value="P:translation"/>
    <property type="evidence" value="ECO:0007669"/>
    <property type="project" value="UniProtKB-UniRule"/>
</dbReference>
<dbReference type="FunFam" id="2.40.30.10:FF:000004">
    <property type="entry name" value="50S ribosomal protein L3"/>
    <property type="match status" value="1"/>
</dbReference>
<dbReference type="FunFam" id="3.30.160.810:FF:000001">
    <property type="entry name" value="50S ribosomal protein L3"/>
    <property type="match status" value="1"/>
</dbReference>
<dbReference type="Gene3D" id="3.30.160.810">
    <property type="match status" value="1"/>
</dbReference>
<dbReference type="Gene3D" id="2.40.30.10">
    <property type="entry name" value="Translation factors"/>
    <property type="match status" value="1"/>
</dbReference>
<dbReference type="HAMAP" id="MF_01325_B">
    <property type="entry name" value="Ribosomal_uL3_B"/>
    <property type="match status" value="1"/>
</dbReference>
<dbReference type="InterPro" id="IPR000597">
    <property type="entry name" value="Ribosomal_uL3"/>
</dbReference>
<dbReference type="InterPro" id="IPR019927">
    <property type="entry name" value="Ribosomal_uL3_bac/org-type"/>
</dbReference>
<dbReference type="InterPro" id="IPR019926">
    <property type="entry name" value="Ribosomal_uL3_CS"/>
</dbReference>
<dbReference type="InterPro" id="IPR009000">
    <property type="entry name" value="Transl_B-barrel_sf"/>
</dbReference>
<dbReference type="NCBIfam" id="TIGR03625">
    <property type="entry name" value="L3_bact"/>
    <property type="match status" value="1"/>
</dbReference>
<dbReference type="PANTHER" id="PTHR11229">
    <property type="entry name" value="50S RIBOSOMAL PROTEIN L3"/>
    <property type="match status" value="1"/>
</dbReference>
<dbReference type="PANTHER" id="PTHR11229:SF16">
    <property type="entry name" value="LARGE RIBOSOMAL SUBUNIT PROTEIN UL3C"/>
    <property type="match status" value="1"/>
</dbReference>
<dbReference type="Pfam" id="PF00297">
    <property type="entry name" value="Ribosomal_L3"/>
    <property type="match status" value="1"/>
</dbReference>
<dbReference type="SUPFAM" id="SSF50447">
    <property type="entry name" value="Translation proteins"/>
    <property type="match status" value="1"/>
</dbReference>
<dbReference type="PROSITE" id="PS00474">
    <property type="entry name" value="RIBOSOMAL_L3"/>
    <property type="match status" value="1"/>
</dbReference>
<organism>
    <name type="scientific">Herminiimonas arsenicoxydans</name>
    <dbReference type="NCBI Taxonomy" id="204773"/>
    <lineage>
        <taxon>Bacteria</taxon>
        <taxon>Pseudomonadati</taxon>
        <taxon>Pseudomonadota</taxon>
        <taxon>Betaproteobacteria</taxon>
        <taxon>Burkholderiales</taxon>
        <taxon>Oxalobacteraceae</taxon>
        <taxon>Herminiimonas</taxon>
    </lineage>
</organism>
<reference key="1">
    <citation type="journal article" date="2007" name="PLoS Genet.">
        <title>A tale of two oxidation states: bacterial colonization of arsenic-rich environments.</title>
        <authorList>
            <person name="Muller D."/>
            <person name="Medigue C."/>
            <person name="Koechler S."/>
            <person name="Barbe V."/>
            <person name="Barakat M."/>
            <person name="Talla E."/>
            <person name="Bonnefoy V."/>
            <person name="Krin E."/>
            <person name="Arsene-Ploetze F."/>
            <person name="Carapito C."/>
            <person name="Chandler M."/>
            <person name="Cournoyer B."/>
            <person name="Cruveiller S."/>
            <person name="Dossat C."/>
            <person name="Duval S."/>
            <person name="Heymann M."/>
            <person name="Leize E."/>
            <person name="Lieutaud A."/>
            <person name="Lievremont D."/>
            <person name="Makita Y."/>
            <person name="Mangenot S."/>
            <person name="Nitschke W."/>
            <person name="Ortet P."/>
            <person name="Perdrial N."/>
            <person name="Schoepp B."/>
            <person name="Siguier P."/>
            <person name="Simeonova D.D."/>
            <person name="Rouy Z."/>
            <person name="Segurens B."/>
            <person name="Turlin E."/>
            <person name="Vallenet D."/>
            <person name="van Dorsselaer A."/>
            <person name="Weiss S."/>
            <person name="Weissenbach J."/>
            <person name="Lett M.-C."/>
            <person name="Danchin A."/>
            <person name="Bertin P.N."/>
        </authorList>
    </citation>
    <scope>NUCLEOTIDE SEQUENCE [LARGE SCALE GENOMIC DNA]</scope>
    <source>
        <strain>ULPAs1</strain>
    </source>
</reference>
<accession>A4G9T8</accession>
<name>RL3_HERAR</name>
<feature type="chain" id="PRO_0000353604" description="Large ribosomal subunit protein uL3">
    <location>
        <begin position="1"/>
        <end position="224"/>
    </location>
</feature>
<feature type="modified residue" description="N5-methylglutamine" evidence="1">
    <location>
        <position position="159"/>
    </location>
</feature>
<comment type="function">
    <text evidence="1">One of the primary rRNA binding proteins, it binds directly near the 3'-end of the 23S rRNA, where it nucleates assembly of the 50S subunit.</text>
</comment>
<comment type="subunit">
    <text evidence="1">Part of the 50S ribosomal subunit. Forms a cluster with proteins L14 and L19.</text>
</comment>
<comment type="PTM">
    <text evidence="1">Methylated by PrmB.</text>
</comment>
<comment type="similarity">
    <text evidence="1">Belongs to the universal ribosomal protein uL3 family.</text>
</comment>
<sequence length="224" mass="23497">MNQNQDKGQGLLGRKVGMMRIFTDDGDSIPVTVLDVSNNRVTQIKTPDVDGYSAVQVAFGSRRASRVNKASAGHHAKAGVEAGTVLKEFRVAATAASELKVGDVIAASLFEVGQKVDVQGVTIGKGYAGTIKRHHFASGRATHGNSRSHNVPGSIGMAQDPGRVFPGKRMTGHLGDVARTMQNLEIARIDADRQLLLVKGAVPGAKNGQVIVSPAVKVKAKKGA</sequence>
<protein>
    <recommendedName>
        <fullName evidence="1">Large ribosomal subunit protein uL3</fullName>
    </recommendedName>
    <alternativeName>
        <fullName evidence="2">50S ribosomal protein L3</fullName>
    </alternativeName>
</protein>
<keyword id="KW-0488">Methylation</keyword>
<keyword id="KW-1185">Reference proteome</keyword>
<keyword id="KW-0687">Ribonucleoprotein</keyword>
<keyword id="KW-0689">Ribosomal protein</keyword>
<keyword id="KW-0694">RNA-binding</keyword>
<keyword id="KW-0699">rRNA-binding</keyword>
<gene>
    <name evidence="1" type="primary">rplC</name>
    <name type="ordered locus">HEAR3166</name>
</gene>
<proteinExistence type="inferred from homology"/>